<sequence length="700" mass="78851">MLKMLSFKLLLLAVALGFFEGDAKFGERNEGSGARRRRCLNGNPPKRLKRRDRRMMSQLELLSGGEMLCGGFYPRLSCCLRSDSPGLGRLENKIFSVTNNTECGKLLEEIKCALCSPHSQSLFHSPEREVLERDLVLPLLCKDYCKEFFYTCRGHIPGFLQTTADEFCFYYARKDGGLCFPDFPRKQVRGPASNYLDQMEEYDKVEEISRKHKHNCFCIQEVVSGLRQPVGALHSGDGSQRLFILEKEGYVKILTPEGEIFKEPYLDIHKLVQSGIKGGDERGLLSLAFHPNYKKNGKLYVSYTTNQERWAIGPHDHILRVVEYTVSRKNPHQVDLRTARVFLEVAELHRKHLGGQLLFGPDGFLYIILGDGMITLDDMEEMDGLSDFTGSVLRLDVDTDMCNVPYSIPRSNPHFNSTNQPPEVFAHGLHDPGRCAVDRHPTDININLTILCSDSNGKNRSSARILQIIKGKDYESEPSLLEFKPFSNGPLVGGFVYRGCQSERLYGSYVFGDRNGNFLTLQQSPVTKQWQEKPLCLGTSGSCRGYFSGHILGFGEDELGEVYILSSSKSMTQTHNGKLYKIVDPKRPLMPEECRATVQPAQTLTSECSRLCRNGYCTPTGKCCCSPGWEGDFCRTAKCEPACRHGGVCVRPNKCLCKKGYLGPQCEQVDRNIRRVTRAGILDQIIDMTSYLLDLTSYIV</sequence>
<dbReference type="EMBL" id="AY009951">
    <property type="protein sequence ID" value="AAG34731.1"/>
    <property type="molecule type" value="mRNA"/>
</dbReference>
<dbReference type="EMBL" id="AF326471">
    <property type="protein sequence ID" value="AAK18182.1"/>
    <property type="molecule type" value="Genomic_DNA"/>
</dbReference>
<dbReference type="EMBL" id="AF326459">
    <property type="protein sequence ID" value="AAK18182.1"/>
    <property type="status" value="JOINED"/>
    <property type="molecule type" value="Genomic_DNA"/>
</dbReference>
<dbReference type="EMBL" id="AF326460">
    <property type="protein sequence ID" value="AAK18182.1"/>
    <property type="status" value="JOINED"/>
    <property type="molecule type" value="Genomic_DNA"/>
</dbReference>
<dbReference type="EMBL" id="AF326462">
    <property type="protein sequence ID" value="AAK18182.1"/>
    <property type="status" value="JOINED"/>
    <property type="molecule type" value="Genomic_DNA"/>
</dbReference>
<dbReference type="EMBL" id="AF326464">
    <property type="protein sequence ID" value="AAK18182.1"/>
    <property type="status" value="JOINED"/>
    <property type="molecule type" value="Genomic_DNA"/>
</dbReference>
<dbReference type="EMBL" id="AF326466">
    <property type="protein sequence ID" value="AAK18182.1"/>
    <property type="status" value="JOINED"/>
    <property type="molecule type" value="Genomic_DNA"/>
</dbReference>
<dbReference type="EMBL" id="AF326468">
    <property type="protein sequence ID" value="AAK18182.1"/>
    <property type="status" value="JOINED"/>
    <property type="molecule type" value="Genomic_DNA"/>
</dbReference>
<dbReference type="EMBL" id="AF326470">
    <property type="protein sequence ID" value="AAK18182.1"/>
    <property type="status" value="JOINED"/>
    <property type="molecule type" value="Genomic_DNA"/>
</dbReference>
<dbReference type="EMBL" id="AF326469">
    <property type="protein sequence ID" value="AAK18182.1"/>
    <property type="status" value="JOINED"/>
    <property type="molecule type" value="Genomic_DNA"/>
</dbReference>
<dbReference type="EMBL" id="AF326467">
    <property type="protein sequence ID" value="AAK18182.1"/>
    <property type="status" value="JOINED"/>
    <property type="molecule type" value="Genomic_DNA"/>
</dbReference>
<dbReference type="EMBL" id="AF326465">
    <property type="protein sequence ID" value="AAK18182.1"/>
    <property type="status" value="JOINED"/>
    <property type="molecule type" value="Genomic_DNA"/>
</dbReference>
<dbReference type="EMBL" id="AF326463">
    <property type="protein sequence ID" value="AAK18182.1"/>
    <property type="status" value="JOINED"/>
    <property type="molecule type" value="Genomic_DNA"/>
</dbReference>
<dbReference type="EMBL" id="AF326461">
    <property type="protein sequence ID" value="AAK18182.1"/>
    <property type="status" value="JOINED"/>
    <property type="molecule type" value="Genomic_DNA"/>
</dbReference>
<dbReference type="EMBL" id="AY009317">
    <property type="protein sequence ID" value="AAG35411.1"/>
    <property type="molecule type" value="mRNA"/>
</dbReference>
<dbReference type="EMBL" id="AY358747">
    <property type="protein sequence ID" value="AAQ89107.1"/>
    <property type="molecule type" value="mRNA"/>
</dbReference>
<dbReference type="EMBL" id="AK024645">
    <property type="protein sequence ID" value="BAB14945.1"/>
    <property type="status" value="ALT_INIT"/>
    <property type="molecule type" value="mRNA"/>
</dbReference>
<dbReference type="EMBL" id="AK074711">
    <property type="protein sequence ID" value="BAC11154.1"/>
    <property type="molecule type" value="mRNA"/>
</dbReference>
<dbReference type="EMBL" id="AC098588">
    <property type="status" value="NOT_ANNOTATED_CDS"/>
    <property type="molecule type" value="Genomic_DNA"/>
</dbReference>
<dbReference type="EMBL" id="BC009298">
    <property type="protein sequence ID" value="AAH09298.1"/>
    <property type="molecule type" value="mRNA"/>
</dbReference>
<dbReference type="EMBL" id="BC025311">
    <property type="protein sequence ID" value="AAH25311.1"/>
    <property type="molecule type" value="mRNA"/>
</dbReference>
<dbReference type="CCDS" id="CCDS3762.1">
    <molecule id="Q96QV1-1"/>
</dbReference>
<dbReference type="RefSeq" id="NP_071920.1">
    <molecule id="Q96QV1-1"/>
    <property type="nucleotide sequence ID" value="NM_022475.3"/>
</dbReference>
<dbReference type="PDB" id="2WFT">
    <property type="method" value="X-ray"/>
    <property type="resolution" value="2.80 A"/>
    <property type="chains" value="A/B=214-671"/>
</dbReference>
<dbReference type="PDB" id="2WFX">
    <property type="method" value="X-ray"/>
    <property type="resolution" value="3.20 A"/>
    <property type="chains" value="B=214-670"/>
</dbReference>
<dbReference type="PDB" id="2WG3">
    <property type="method" value="X-ray"/>
    <property type="resolution" value="2.60 A"/>
    <property type="chains" value="C/D=214-670"/>
</dbReference>
<dbReference type="PDB" id="2WG4">
    <property type="method" value="X-ray"/>
    <property type="resolution" value="3.15 A"/>
    <property type="chains" value="B=214-670"/>
</dbReference>
<dbReference type="PDB" id="3HO3">
    <property type="method" value="X-ray"/>
    <property type="resolution" value="2.90 A"/>
    <property type="chains" value="A=193-667"/>
</dbReference>
<dbReference type="PDB" id="3HO4">
    <property type="method" value="X-ray"/>
    <property type="resolution" value="3.10 A"/>
    <property type="chains" value="A/B=193-667"/>
</dbReference>
<dbReference type="PDB" id="3HO5">
    <property type="method" value="X-ray"/>
    <property type="resolution" value="3.01 A"/>
    <property type="chains" value="A/B=193-667"/>
</dbReference>
<dbReference type="PDB" id="7PGK">
    <property type="method" value="X-ray"/>
    <property type="resolution" value="2.75 A"/>
    <property type="chains" value="A=39-209"/>
</dbReference>
<dbReference type="PDB" id="7PGL">
    <property type="method" value="X-ray"/>
    <property type="resolution" value="2.63 A"/>
    <property type="chains" value="A=39-209"/>
</dbReference>
<dbReference type="PDB" id="7PGM">
    <property type="method" value="X-ray"/>
    <property type="resolution" value="2.70 A"/>
    <property type="chains" value="A/B/C=213-670"/>
</dbReference>
<dbReference type="PDB" id="7PGN">
    <property type="method" value="X-ray"/>
    <property type="resolution" value="2.40 A"/>
    <property type="chains" value="A/B=213-670"/>
</dbReference>
<dbReference type="PDBsum" id="2WFT"/>
<dbReference type="PDBsum" id="2WFX"/>
<dbReference type="PDBsum" id="2WG3"/>
<dbReference type="PDBsum" id="2WG4"/>
<dbReference type="PDBsum" id="3HO3"/>
<dbReference type="PDBsum" id="3HO4"/>
<dbReference type="PDBsum" id="3HO5"/>
<dbReference type="PDBsum" id="7PGK"/>
<dbReference type="PDBsum" id="7PGL"/>
<dbReference type="PDBsum" id="7PGM"/>
<dbReference type="PDBsum" id="7PGN"/>
<dbReference type="SMR" id="Q96QV1"/>
<dbReference type="BioGRID" id="122156">
    <property type="interactions" value="6"/>
</dbReference>
<dbReference type="DIP" id="DIP-48536N"/>
<dbReference type="FunCoup" id="Q96QV1">
    <property type="interactions" value="460"/>
</dbReference>
<dbReference type="IntAct" id="Q96QV1">
    <property type="interactions" value="7"/>
</dbReference>
<dbReference type="STRING" id="9606.ENSP00000296575"/>
<dbReference type="GlyCosmos" id="Q96QV1">
    <property type="glycosylation" value="4 sites, No reported glycans"/>
</dbReference>
<dbReference type="GlyGen" id="Q96QV1">
    <property type="glycosylation" value="4 sites, 2 N-linked glycans (3 sites)"/>
</dbReference>
<dbReference type="iPTMnet" id="Q96QV1"/>
<dbReference type="PhosphoSitePlus" id="Q96QV1"/>
<dbReference type="BioMuta" id="HHIP"/>
<dbReference type="DMDM" id="118572655"/>
<dbReference type="jPOST" id="Q96QV1"/>
<dbReference type="MassIVE" id="Q96QV1"/>
<dbReference type="PaxDb" id="9606-ENSP00000296575"/>
<dbReference type="PeptideAtlas" id="Q96QV1"/>
<dbReference type="ProteomicsDB" id="77909">
    <molecule id="Q96QV1-1"/>
</dbReference>
<dbReference type="ProteomicsDB" id="77910">
    <molecule id="Q96QV1-2"/>
</dbReference>
<dbReference type="Antibodypedia" id="2783">
    <property type="antibodies" value="245 antibodies from 29 providers"/>
</dbReference>
<dbReference type="DNASU" id="64399"/>
<dbReference type="Ensembl" id="ENST00000296575.8">
    <molecule id="Q96QV1-1"/>
    <property type="protein sequence ID" value="ENSP00000296575.3"/>
    <property type="gene ID" value="ENSG00000164161.10"/>
</dbReference>
<dbReference type="Ensembl" id="ENST00000434550.2">
    <molecule id="Q96QV1-2"/>
    <property type="protein sequence ID" value="ENSP00000408587.2"/>
    <property type="gene ID" value="ENSG00000164161.10"/>
</dbReference>
<dbReference type="GeneID" id="64399"/>
<dbReference type="KEGG" id="hsa:64399"/>
<dbReference type="MANE-Select" id="ENST00000296575.8">
    <property type="protein sequence ID" value="ENSP00000296575.3"/>
    <property type="RefSeq nucleotide sequence ID" value="NM_022475.3"/>
    <property type="RefSeq protein sequence ID" value="NP_071920.1"/>
</dbReference>
<dbReference type="UCSC" id="uc003ijr.3">
    <molecule id="Q96QV1-1"/>
    <property type="organism name" value="human"/>
</dbReference>
<dbReference type="AGR" id="HGNC:14866"/>
<dbReference type="CTD" id="64399"/>
<dbReference type="DisGeNET" id="64399"/>
<dbReference type="GeneCards" id="HHIP"/>
<dbReference type="HGNC" id="HGNC:14866">
    <property type="gene designation" value="HHIP"/>
</dbReference>
<dbReference type="HPA" id="ENSG00000164161">
    <property type="expression patterns" value="Tissue enhanced (brain, lung)"/>
</dbReference>
<dbReference type="MIM" id="606178">
    <property type="type" value="gene"/>
</dbReference>
<dbReference type="MIM" id="612224">
    <property type="type" value="phenotype"/>
</dbReference>
<dbReference type="neXtProt" id="NX_Q96QV1"/>
<dbReference type="OpenTargets" id="ENSG00000164161"/>
<dbReference type="PharmGKB" id="PA29276"/>
<dbReference type="VEuPathDB" id="HostDB:ENSG00000164161"/>
<dbReference type="eggNOG" id="KOG4295">
    <property type="taxonomic scope" value="Eukaryota"/>
</dbReference>
<dbReference type="GeneTree" id="ENSGT00940000158660"/>
<dbReference type="HOGENOM" id="CLU_012344_0_0_1"/>
<dbReference type="InParanoid" id="Q96QV1"/>
<dbReference type="OMA" id="RMPHREP"/>
<dbReference type="OrthoDB" id="10266706at2759"/>
<dbReference type="PAN-GO" id="Q96QV1">
    <property type="GO annotations" value="0 GO annotations based on evolutionary models"/>
</dbReference>
<dbReference type="PhylomeDB" id="Q96QV1"/>
<dbReference type="TreeFam" id="TF329059"/>
<dbReference type="PathwayCommons" id="Q96QV1"/>
<dbReference type="Reactome" id="R-HSA-5632681">
    <property type="pathway name" value="Ligand-receptor interactions"/>
</dbReference>
<dbReference type="SignaLink" id="Q96QV1"/>
<dbReference type="SIGNOR" id="Q96QV1"/>
<dbReference type="BioGRID-ORCS" id="64399">
    <property type="hits" value="14 hits in 1149 CRISPR screens"/>
</dbReference>
<dbReference type="ChiTaRS" id="HHIP">
    <property type="organism name" value="human"/>
</dbReference>
<dbReference type="EvolutionaryTrace" id="Q96QV1"/>
<dbReference type="GeneWiki" id="HHIP"/>
<dbReference type="GenomeRNAi" id="64399"/>
<dbReference type="Pharos" id="Q96QV1">
    <property type="development level" value="Tbio"/>
</dbReference>
<dbReference type="PRO" id="PR:Q96QV1"/>
<dbReference type="Proteomes" id="UP000005640">
    <property type="component" value="Chromosome 4"/>
</dbReference>
<dbReference type="RNAct" id="Q96QV1">
    <property type="molecule type" value="protein"/>
</dbReference>
<dbReference type="Bgee" id="ENSG00000164161">
    <property type="expression patterns" value="Expressed in corpus callosum and 145 other cell types or tissues"/>
</dbReference>
<dbReference type="GO" id="GO:0009986">
    <property type="term" value="C:cell surface"/>
    <property type="evidence" value="ECO:0007669"/>
    <property type="project" value="Ensembl"/>
</dbReference>
<dbReference type="GO" id="GO:0060170">
    <property type="term" value="C:ciliary membrane"/>
    <property type="evidence" value="ECO:0000304"/>
    <property type="project" value="Reactome"/>
</dbReference>
<dbReference type="GO" id="GO:0005737">
    <property type="term" value="C:cytoplasm"/>
    <property type="evidence" value="ECO:0007669"/>
    <property type="project" value="UniProtKB-SubCell"/>
</dbReference>
<dbReference type="GO" id="GO:0005576">
    <property type="term" value="C:extracellular region"/>
    <property type="evidence" value="ECO:0007669"/>
    <property type="project" value="UniProtKB-SubCell"/>
</dbReference>
<dbReference type="GO" id="GO:0005886">
    <property type="term" value="C:plasma membrane"/>
    <property type="evidence" value="ECO:0000250"/>
    <property type="project" value="BHF-UCL"/>
</dbReference>
<dbReference type="GO" id="GO:0097108">
    <property type="term" value="F:hedgehog family protein binding"/>
    <property type="evidence" value="ECO:0000353"/>
    <property type="project" value="BHF-UCL"/>
</dbReference>
<dbReference type="GO" id="GO:0008270">
    <property type="term" value="F:zinc ion binding"/>
    <property type="evidence" value="ECO:0000314"/>
    <property type="project" value="UniProtKB"/>
</dbReference>
<dbReference type="GO" id="GO:0009953">
    <property type="term" value="P:dorsal/ventral pattern formation"/>
    <property type="evidence" value="ECO:0007669"/>
    <property type="project" value="Ensembl"/>
</dbReference>
<dbReference type="GO" id="GO:0060441">
    <property type="term" value="P:epithelial tube branching involved in lung morphogenesis"/>
    <property type="evidence" value="ECO:0007669"/>
    <property type="project" value="Ensembl"/>
</dbReference>
<dbReference type="GO" id="GO:0009968">
    <property type="term" value="P:negative regulation of signal transduction"/>
    <property type="evidence" value="ECO:0000314"/>
    <property type="project" value="UniProtKB"/>
</dbReference>
<dbReference type="GO" id="GO:0045879">
    <property type="term" value="P:negative regulation of smoothened signaling pathway"/>
    <property type="evidence" value="ECO:0000250"/>
    <property type="project" value="BHF-UCL"/>
</dbReference>
<dbReference type="GO" id="GO:0007405">
    <property type="term" value="P:neuroblast proliferation"/>
    <property type="evidence" value="ECO:0007669"/>
    <property type="project" value="Ensembl"/>
</dbReference>
<dbReference type="GO" id="GO:0040036">
    <property type="term" value="P:regulation of fibroblast growth factor receptor signaling pathway"/>
    <property type="evidence" value="ECO:0007669"/>
    <property type="project" value="Ensembl"/>
</dbReference>
<dbReference type="GO" id="GO:0007165">
    <property type="term" value="P:signal transduction"/>
    <property type="evidence" value="ECO:0007669"/>
    <property type="project" value="Ensembl"/>
</dbReference>
<dbReference type="GO" id="GO:0048705">
    <property type="term" value="P:skeletal system morphogenesis"/>
    <property type="evidence" value="ECO:0000250"/>
    <property type="project" value="BHF-UCL"/>
</dbReference>
<dbReference type="FunFam" id="2.120.10.30:FF:000026">
    <property type="entry name" value="hedgehog-interacting protein-like isoform X1"/>
    <property type="match status" value="1"/>
</dbReference>
<dbReference type="FunFam" id="2.10.25.10:FF:000020">
    <property type="entry name" value="Latent-transforming growth factor beta-binding protein 1"/>
    <property type="match status" value="1"/>
</dbReference>
<dbReference type="Gene3D" id="2.10.25.10">
    <property type="entry name" value="Laminin"/>
    <property type="match status" value="2"/>
</dbReference>
<dbReference type="Gene3D" id="2.120.10.30">
    <property type="entry name" value="TolB, C-terminal domain"/>
    <property type="match status" value="1"/>
</dbReference>
<dbReference type="InterPro" id="IPR011042">
    <property type="entry name" value="6-blade_b-propeller_TolB-like"/>
</dbReference>
<dbReference type="InterPro" id="IPR000742">
    <property type="entry name" value="EGF-like_dom"/>
</dbReference>
<dbReference type="InterPro" id="IPR013111">
    <property type="entry name" value="EGF_extracell"/>
</dbReference>
<dbReference type="InterPro" id="IPR018143">
    <property type="entry name" value="Folate_rcpt-like"/>
</dbReference>
<dbReference type="InterPro" id="IPR012938">
    <property type="entry name" value="Glc/Sorbosone_DH"/>
</dbReference>
<dbReference type="InterPro" id="IPR011041">
    <property type="entry name" value="Quinoprot_gluc/sorb_DH_b-prop"/>
</dbReference>
<dbReference type="PANTHER" id="PTHR19328">
    <property type="entry name" value="HEDGEHOG-INTERACTING PROTEIN"/>
    <property type="match status" value="1"/>
</dbReference>
<dbReference type="PANTHER" id="PTHR19328:SF27">
    <property type="entry name" value="HEDGEHOG-INTERACTING PROTEIN"/>
    <property type="match status" value="1"/>
</dbReference>
<dbReference type="Pfam" id="PF07974">
    <property type="entry name" value="EGF_2"/>
    <property type="match status" value="1"/>
</dbReference>
<dbReference type="Pfam" id="PF03024">
    <property type="entry name" value="Folate_rec"/>
    <property type="match status" value="1"/>
</dbReference>
<dbReference type="Pfam" id="PF07995">
    <property type="entry name" value="GSDH"/>
    <property type="match status" value="1"/>
</dbReference>
<dbReference type="SMART" id="SM00181">
    <property type="entry name" value="EGF"/>
    <property type="match status" value="2"/>
</dbReference>
<dbReference type="SUPFAM" id="SSF50952">
    <property type="entry name" value="Soluble quinoprotein glucose dehydrogenase"/>
    <property type="match status" value="1"/>
</dbReference>
<dbReference type="PROSITE" id="PS00022">
    <property type="entry name" value="EGF_1"/>
    <property type="match status" value="2"/>
</dbReference>
<dbReference type="PROSITE" id="PS01186">
    <property type="entry name" value="EGF_2"/>
    <property type="match status" value="2"/>
</dbReference>
<dbReference type="PROSITE" id="PS50026">
    <property type="entry name" value="EGF_3"/>
    <property type="match status" value="1"/>
</dbReference>
<protein>
    <recommendedName>
        <fullName>Hedgehog-interacting protein</fullName>
        <shortName>HHIP</shortName>
        <shortName>HIP</shortName>
    </recommendedName>
</protein>
<comment type="function">
    <text evidence="5 8">Modulates hedgehog signaling in several cell types including brain and lung through direct interaction with members of the hedgehog family.</text>
</comment>
<comment type="subunit">
    <text evidence="5 8 9">Interacts with all three hedgehog family members, SHH, IHH and DHH.</text>
</comment>
<comment type="interaction">
    <interactant intactId="EBI-6598521">
        <id>Q96QV1</id>
    </interactant>
    <interactant intactId="EBI-11666886">
        <id>Q15465</id>
        <label>SHH</label>
    </interactant>
    <organismsDiffer>false</organismsDiffer>
    <experiments>10</experiments>
</comment>
<comment type="interaction">
    <interactant intactId="EBI-15791478">
        <id>Q96QV1-1</id>
    </interactant>
    <interactant intactId="EBI-11667804">
        <id>O43323</id>
        <label>DHH</label>
    </interactant>
    <organismsDiffer>false</organismsDiffer>
    <experiments>4</experiments>
</comment>
<comment type="interaction">
    <interactant intactId="EBI-15791478">
        <id>Q96QV1-1</id>
    </interactant>
    <interactant intactId="EBI-15610166">
        <id>Q62226</id>
        <label>Shh</label>
    </interactant>
    <organismsDiffer>true</organismsDiffer>
    <experiments>4</experiments>
</comment>
<comment type="subcellular location">
    <subcellularLocation>
        <location evidence="1">Cell membrane</location>
        <topology evidence="1">Peripheral membrane protein</topology>
    </subcellularLocation>
    <subcellularLocation>
        <location evidence="1">Secreted</location>
    </subcellularLocation>
    <text>The last 22 C-terminal amino acids may participate in cell membrane attachment.</text>
</comment>
<comment type="subcellular location">
    <molecule>Isoform 2</molecule>
    <subcellularLocation>
        <location evidence="13">Cytoplasm</location>
    </subcellularLocation>
</comment>
<comment type="alternative products">
    <event type="alternative splicing"/>
    <isoform>
        <id>Q96QV1-1</id>
        <name>1</name>
        <sequence type="displayed"/>
    </isoform>
    <isoform>
        <id>Q96QV1-2</id>
        <name>2</name>
        <sequence type="described" ref="VSP_013192 VSP_013193"/>
    </isoform>
</comment>
<comment type="tissue specificity">
    <text evidence="4 10">Widely expressed in fetal and adult tissues. Highest expression in adult heart, liver and pancreas, and in fetal kidney.</text>
</comment>
<comment type="domain">
    <text>A flexible loop interacts with the SHH zinc binding site and contributes to zinc binding.</text>
</comment>
<comment type="polymorphism">
    <text evidence="7">Genetic variations in HHIP define the stature quantitative trait locus 12 (STQTL12) [MIM:612224]. Adult height is an easily observable and highly heritable complex continuous trait. Because of this, it is a model trait for studying genetic influence on quantitative traits.</text>
</comment>
<comment type="miscellaneous">
    <molecule>Isoform 2</molecule>
    <text evidence="13">Potentially soluble form.</text>
</comment>
<comment type="similarity">
    <text evidence="13">Belongs to the HHIP family.</text>
</comment>
<comment type="sequence caution" evidence="13">
    <conflict type="erroneous initiation">
        <sequence resource="EMBL-CDS" id="BAB14945"/>
    </conflict>
    <text>Truncated N-terminus.</text>
</comment>
<proteinExistence type="evidence at protein level"/>
<organism>
    <name type="scientific">Homo sapiens</name>
    <name type="common">Human</name>
    <dbReference type="NCBI Taxonomy" id="9606"/>
    <lineage>
        <taxon>Eukaryota</taxon>
        <taxon>Metazoa</taxon>
        <taxon>Chordata</taxon>
        <taxon>Craniata</taxon>
        <taxon>Vertebrata</taxon>
        <taxon>Euteleostomi</taxon>
        <taxon>Mammalia</taxon>
        <taxon>Eutheria</taxon>
        <taxon>Euarchontoglires</taxon>
        <taxon>Primates</taxon>
        <taxon>Haplorrhini</taxon>
        <taxon>Catarrhini</taxon>
        <taxon>Hominidae</taxon>
        <taxon>Homo</taxon>
    </lineage>
</organism>
<reference key="1">
    <citation type="journal article" date="2000" name="Gene Funct. Dis.">
        <title>Determination of the chromosomal location and genomic structure of the Hedgehog-interacting protein gene, and analysis of its role in holoprosencephaly.</title>
        <authorList>
            <person name="Huo L."/>
            <person name="Roessler E."/>
            <person name="Dutra A."/>
            <person name="Chuang P.-T."/>
            <person name="McMahon A.P."/>
            <person name="Muenke M."/>
        </authorList>
    </citation>
    <scope>NUCLEOTIDE SEQUENCE [GENOMIC DNA / MRNA] (ISOFORM 1)</scope>
    <scope>VARIANT ILE-341</scope>
    <scope>TISSUE SPECIFICITY</scope>
    <source>
        <tissue>Fetal brain</tissue>
    </source>
</reference>
<reference key="2">
    <citation type="journal article" date="2001" name="Cytogenet. Cell Genet.">
        <title>The human hedgehog-interacting protein gene: structure and chromosome mapping to 4q31.21--&gt;q31.3.</title>
        <authorList>
            <person name="Bak M."/>
            <person name="Hansen C."/>
            <person name="Friis Henriksen K."/>
            <person name="Tommerup N."/>
        </authorList>
    </citation>
    <scope>NUCLEOTIDE SEQUENCE [MRNA] (ISOFORM 1)</scope>
    <scope>TISSUE SPECIFICITY</scope>
    <source>
        <tissue>Testis</tissue>
    </source>
</reference>
<reference key="3">
    <citation type="journal article" date="2003" name="Genome Res.">
        <title>The secreted protein discovery initiative (SPDI), a large-scale effort to identify novel human secreted and transmembrane proteins: a bioinformatics assessment.</title>
        <authorList>
            <person name="Clark H.F."/>
            <person name="Gurney A.L."/>
            <person name="Abaya E."/>
            <person name="Baker K."/>
            <person name="Baldwin D.T."/>
            <person name="Brush J."/>
            <person name="Chen J."/>
            <person name="Chow B."/>
            <person name="Chui C."/>
            <person name="Crowley C."/>
            <person name="Currell B."/>
            <person name="Deuel B."/>
            <person name="Dowd P."/>
            <person name="Eaton D."/>
            <person name="Foster J.S."/>
            <person name="Grimaldi C."/>
            <person name="Gu Q."/>
            <person name="Hass P.E."/>
            <person name="Heldens S."/>
            <person name="Huang A."/>
            <person name="Kim H.S."/>
            <person name="Klimowski L."/>
            <person name="Jin Y."/>
            <person name="Johnson S."/>
            <person name="Lee J."/>
            <person name="Lewis L."/>
            <person name="Liao D."/>
            <person name="Mark M.R."/>
            <person name="Robbie E."/>
            <person name="Sanchez C."/>
            <person name="Schoenfeld J."/>
            <person name="Seshagiri S."/>
            <person name="Simmons L."/>
            <person name="Singh J."/>
            <person name="Smith V."/>
            <person name="Stinson J."/>
            <person name="Vagts A."/>
            <person name="Vandlen R.L."/>
            <person name="Watanabe C."/>
            <person name="Wieand D."/>
            <person name="Woods K."/>
            <person name="Xie M.-H."/>
            <person name="Yansura D.G."/>
            <person name="Yi S."/>
            <person name="Yu G."/>
            <person name="Yuan J."/>
            <person name="Zhang M."/>
            <person name="Zhang Z."/>
            <person name="Goddard A.D."/>
            <person name="Wood W.I."/>
            <person name="Godowski P.J."/>
            <person name="Gray A.M."/>
        </authorList>
    </citation>
    <scope>NUCLEOTIDE SEQUENCE [LARGE SCALE MRNA] (ISOFORM 1)</scope>
</reference>
<reference key="4">
    <citation type="journal article" date="2004" name="Nat. Genet.">
        <title>Complete sequencing and characterization of 21,243 full-length human cDNAs.</title>
        <authorList>
            <person name="Ota T."/>
            <person name="Suzuki Y."/>
            <person name="Nishikawa T."/>
            <person name="Otsuki T."/>
            <person name="Sugiyama T."/>
            <person name="Irie R."/>
            <person name="Wakamatsu A."/>
            <person name="Hayashi K."/>
            <person name="Sato H."/>
            <person name="Nagai K."/>
            <person name="Kimura K."/>
            <person name="Makita H."/>
            <person name="Sekine M."/>
            <person name="Obayashi M."/>
            <person name="Nishi T."/>
            <person name="Shibahara T."/>
            <person name="Tanaka T."/>
            <person name="Ishii S."/>
            <person name="Yamamoto J."/>
            <person name="Saito K."/>
            <person name="Kawai Y."/>
            <person name="Isono Y."/>
            <person name="Nakamura Y."/>
            <person name="Nagahari K."/>
            <person name="Murakami K."/>
            <person name="Yasuda T."/>
            <person name="Iwayanagi T."/>
            <person name="Wagatsuma M."/>
            <person name="Shiratori A."/>
            <person name="Sudo H."/>
            <person name="Hosoiri T."/>
            <person name="Kaku Y."/>
            <person name="Kodaira H."/>
            <person name="Kondo H."/>
            <person name="Sugawara M."/>
            <person name="Takahashi M."/>
            <person name="Kanda K."/>
            <person name="Yokoi T."/>
            <person name="Furuya T."/>
            <person name="Kikkawa E."/>
            <person name="Omura Y."/>
            <person name="Abe K."/>
            <person name="Kamihara K."/>
            <person name="Katsuta N."/>
            <person name="Sato K."/>
            <person name="Tanikawa M."/>
            <person name="Yamazaki M."/>
            <person name="Ninomiya K."/>
            <person name="Ishibashi T."/>
            <person name="Yamashita H."/>
            <person name="Murakawa K."/>
            <person name="Fujimori K."/>
            <person name="Tanai H."/>
            <person name="Kimata M."/>
            <person name="Watanabe M."/>
            <person name="Hiraoka S."/>
            <person name="Chiba Y."/>
            <person name="Ishida S."/>
            <person name="Ono Y."/>
            <person name="Takiguchi S."/>
            <person name="Watanabe S."/>
            <person name="Yosida M."/>
            <person name="Hotuta T."/>
            <person name="Kusano J."/>
            <person name="Kanehori K."/>
            <person name="Takahashi-Fujii A."/>
            <person name="Hara H."/>
            <person name="Tanase T.-O."/>
            <person name="Nomura Y."/>
            <person name="Togiya S."/>
            <person name="Komai F."/>
            <person name="Hara R."/>
            <person name="Takeuchi K."/>
            <person name="Arita M."/>
            <person name="Imose N."/>
            <person name="Musashino K."/>
            <person name="Yuuki H."/>
            <person name="Oshima A."/>
            <person name="Sasaki N."/>
            <person name="Aotsuka S."/>
            <person name="Yoshikawa Y."/>
            <person name="Matsunawa H."/>
            <person name="Ichihara T."/>
            <person name="Shiohata N."/>
            <person name="Sano S."/>
            <person name="Moriya S."/>
            <person name="Momiyama H."/>
            <person name="Satoh N."/>
            <person name="Takami S."/>
            <person name="Terashima Y."/>
            <person name="Suzuki O."/>
            <person name="Nakagawa S."/>
            <person name="Senoh A."/>
            <person name="Mizoguchi H."/>
            <person name="Goto Y."/>
            <person name="Shimizu F."/>
            <person name="Wakebe H."/>
            <person name="Hishigaki H."/>
            <person name="Watanabe T."/>
            <person name="Sugiyama A."/>
            <person name="Takemoto M."/>
            <person name="Kawakami B."/>
            <person name="Yamazaki M."/>
            <person name="Watanabe K."/>
            <person name="Kumagai A."/>
            <person name="Itakura S."/>
            <person name="Fukuzumi Y."/>
            <person name="Fujimori Y."/>
            <person name="Komiyama M."/>
            <person name="Tashiro H."/>
            <person name="Tanigami A."/>
            <person name="Fujiwara T."/>
            <person name="Ono T."/>
            <person name="Yamada K."/>
            <person name="Fujii Y."/>
            <person name="Ozaki K."/>
            <person name="Hirao M."/>
            <person name="Ohmori Y."/>
            <person name="Kawabata A."/>
            <person name="Hikiji T."/>
            <person name="Kobatake N."/>
            <person name="Inagaki H."/>
            <person name="Ikema Y."/>
            <person name="Okamoto S."/>
            <person name="Okitani R."/>
            <person name="Kawakami T."/>
            <person name="Noguchi S."/>
            <person name="Itoh T."/>
            <person name="Shigeta K."/>
            <person name="Senba T."/>
            <person name="Matsumura K."/>
            <person name="Nakajima Y."/>
            <person name="Mizuno T."/>
            <person name="Morinaga M."/>
            <person name="Sasaki M."/>
            <person name="Togashi T."/>
            <person name="Oyama M."/>
            <person name="Hata H."/>
            <person name="Watanabe M."/>
            <person name="Komatsu T."/>
            <person name="Mizushima-Sugano J."/>
            <person name="Satoh T."/>
            <person name="Shirai Y."/>
            <person name="Takahashi Y."/>
            <person name="Nakagawa K."/>
            <person name="Okumura K."/>
            <person name="Nagase T."/>
            <person name="Nomura N."/>
            <person name="Kikuchi H."/>
            <person name="Masuho Y."/>
            <person name="Yamashita R."/>
            <person name="Nakai K."/>
            <person name="Yada T."/>
            <person name="Nakamura Y."/>
            <person name="Ohara O."/>
            <person name="Isogai T."/>
            <person name="Sugano S."/>
        </authorList>
    </citation>
    <scope>NUCLEOTIDE SEQUENCE [LARGE SCALE MRNA] (ISOFORMS 1 AND 2)</scope>
    <scope>VARIANT ILE-341</scope>
    <source>
        <tissue>Coronary arterial endothelium</tissue>
        <tissue>Teratocarcinoma</tissue>
    </source>
</reference>
<reference key="5">
    <citation type="journal article" date="2005" name="Nature">
        <title>Generation and annotation of the DNA sequences of human chromosomes 2 and 4.</title>
        <authorList>
            <person name="Hillier L.W."/>
            <person name="Graves T.A."/>
            <person name="Fulton R.S."/>
            <person name="Fulton L.A."/>
            <person name="Pepin K.H."/>
            <person name="Minx P."/>
            <person name="Wagner-McPherson C."/>
            <person name="Layman D."/>
            <person name="Wylie K."/>
            <person name="Sekhon M."/>
            <person name="Becker M.C."/>
            <person name="Fewell G.A."/>
            <person name="Delehaunty K.D."/>
            <person name="Miner T.L."/>
            <person name="Nash W.E."/>
            <person name="Kremitzki C."/>
            <person name="Oddy L."/>
            <person name="Du H."/>
            <person name="Sun H."/>
            <person name="Bradshaw-Cordum H."/>
            <person name="Ali J."/>
            <person name="Carter J."/>
            <person name="Cordes M."/>
            <person name="Harris A."/>
            <person name="Isak A."/>
            <person name="van Brunt A."/>
            <person name="Nguyen C."/>
            <person name="Du F."/>
            <person name="Courtney L."/>
            <person name="Kalicki J."/>
            <person name="Ozersky P."/>
            <person name="Abbott S."/>
            <person name="Armstrong J."/>
            <person name="Belter E.A."/>
            <person name="Caruso L."/>
            <person name="Cedroni M."/>
            <person name="Cotton M."/>
            <person name="Davidson T."/>
            <person name="Desai A."/>
            <person name="Elliott G."/>
            <person name="Erb T."/>
            <person name="Fronick C."/>
            <person name="Gaige T."/>
            <person name="Haakenson W."/>
            <person name="Haglund K."/>
            <person name="Holmes A."/>
            <person name="Harkins R."/>
            <person name="Kim K."/>
            <person name="Kruchowski S.S."/>
            <person name="Strong C.M."/>
            <person name="Grewal N."/>
            <person name="Goyea E."/>
            <person name="Hou S."/>
            <person name="Levy A."/>
            <person name="Martinka S."/>
            <person name="Mead K."/>
            <person name="McLellan M.D."/>
            <person name="Meyer R."/>
            <person name="Randall-Maher J."/>
            <person name="Tomlinson C."/>
            <person name="Dauphin-Kohlberg S."/>
            <person name="Kozlowicz-Reilly A."/>
            <person name="Shah N."/>
            <person name="Swearengen-Shahid S."/>
            <person name="Snider J."/>
            <person name="Strong J.T."/>
            <person name="Thompson J."/>
            <person name="Yoakum M."/>
            <person name="Leonard S."/>
            <person name="Pearman C."/>
            <person name="Trani L."/>
            <person name="Radionenko M."/>
            <person name="Waligorski J.E."/>
            <person name="Wang C."/>
            <person name="Rock S.M."/>
            <person name="Tin-Wollam A.-M."/>
            <person name="Maupin R."/>
            <person name="Latreille P."/>
            <person name="Wendl M.C."/>
            <person name="Yang S.-P."/>
            <person name="Pohl C."/>
            <person name="Wallis J.W."/>
            <person name="Spieth J."/>
            <person name="Bieri T.A."/>
            <person name="Berkowicz N."/>
            <person name="Nelson J.O."/>
            <person name="Osborne J."/>
            <person name="Ding L."/>
            <person name="Meyer R."/>
            <person name="Sabo A."/>
            <person name="Shotland Y."/>
            <person name="Sinha P."/>
            <person name="Wohldmann P.E."/>
            <person name="Cook L.L."/>
            <person name="Hickenbotham M.T."/>
            <person name="Eldred J."/>
            <person name="Williams D."/>
            <person name="Jones T.A."/>
            <person name="She X."/>
            <person name="Ciccarelli F.D."/>
            <person name="Izaurralde E."/>
            <person name="Taylor J."/>
            <person name="Schmutz J."/>
            <person name="Myers R.M."/>
            <person name="Cox D.R."/>
            <person name="Huang X."/>
            <person name="McPherson J.D."/>
            <person name="Mardis E.R."/>
            <person name="Clifton S.W."/>
            <person name="Warren W.C."/>
            <person name="Chinwalla A.T."/>
            <person name="Eddy S.R."/>
            <person name="Marra M.A."/>
            <person name="Ovcharenko I."/>
            <person name="Furey T.S."/>
            <person name="Miller W."/>
            <person name="Eichler E.E."/>
            <person name="Bork P."/>
            <person name="Suyama M."/>
            <person name="Torrents D."/>
            <person name="Waterston R.H."/>
            <person name="Wilson R.K."/>
        </authorList>
    </citation>
    <scope>NUCLEOTIDE SEQUENCE [LARGE SCALE GENOMIC DNA]</scope>
</reference>
<reference key="6">
    <citation type="journal article" date="2004" name="Genome Res.">
        <title>The status, quality, and expansion of the NIH full-length cDNA project: the Mammalian Gene Collection (MGC).</title>
        <authorList>
            <consortium name="The MGC Project Team"/>
        </authorList>
    </citation>
    <scope>NUCLEOTIDE SEQUENCE [LARGE SCALE MRNA] (ISOFORMS 1 AND 2)</scope>
    <source>
        <tissue>Muscle</tissue>
    </source>
</reference>
<reference key="7">
    <citation type="journal article" date="2001" name="Mech. Dev.">
        <title>Comparative biological responses to human Sonic, Indian, and Desert hedgehog.</title>
        <authorList>
            <person name="Pathi S."/>
            <person name="Pagan-Westphal S."/>
            <person name="Baker D.P."/>
            <person name="Garber E.A."/>
            <person name="Rayhorn P."/>
            <person name="Bumcrot D."/>
            <person name="Tabin C.J."/>
            <person name="Blake Pepinsky R."/>
            <person name="Williams K.P."/>
        </authorList>
    </citation>
    <scope>FUNCTION</scope>
    <scope>SUBUNIT</scope>
</reference>
<reference key="8">
    <citation type="journal article" date="2008" name="Nat. Genet.">
        <title>Identification of ten loci associated with height highlights new biological pathways in human growth.</title>
        <authorList>
            <person name="Lettre G."/>
            <person name="Jackson A.U."/>
            <person name="Gieger C."/>
            <person name="Schumacher F.R."/>
            <person name="Berndt S.I."/>
            <person name="Sanna S."/>
            <person name="Eyheramendy S."/>
            <person name="Voight B.F."/>
            <person name="Butler J.L."/>
            <person name="Guiducci C."/>
            <person name="Illig T."/>
            <person name="Hackett R."/>
            <person name="Heid I.M."/>
            <person name="Jacobs K.B."/>
            <person name="Lyssenko V."/>
            <person name="Uda M."/>
            <person name="Boehnke M."/>
            <person name="Chanock S.J."/>
            <person name="Groop L.C."/>
            <person name="Hu F.B."/>
            <person name="Isomaa B."/>
            <person name="Kraft P."/>
            <person name="Peltonen L."/>
            <person name="Salomaa V."/>
            <person name="Schlessinger D."/>
            <person name="Hunter D.J."/>
            <person name="Hayes R.B."/>
            <person name="Abecasis G.R."/>
            <person name="Wichmann H.-E."/>
            <person name="Mohlke K.L."/>
            <person name="Hirschhorn J.N."/>
        </authorList>
    </citation>
    <scope>POLYMORPHISM</scope>
</reference>
<reference key="9">
    <citation type="journal article" date="2009" name="Nat. Struct. Mol. Biol.">
        <title>The structure of SHH in complex with HHIP reveals a recognition role for the Shh pseudo active site in signaling.</title>
        <authorList>
            <person name="Bosanac I."/>
            <person name="Maun H.R."/>
            <person name="Scales S.J."/>
            <person name="Wen X."/>
            <person name="Lingel A."/>
            <person name="Bazan J.F."/>
            <person name="de Sauvage F.J."/>
            <person name="Hymowitz S.G."/>
            <person name="Lazarus R.A."/>
        </authorList>
    </citation>
    <scope>X-RAY CRYSTALLOGRAPHY (2.9 ANGSTROMS) OF 193-667 IN COMPLEX WITH SHH</scope>
    <scope>INTERACTION WITH SHH</scope>
    <scope>FUNCTION</scope>
    <scope>MUTAGENESIS OF GLU-380; MET-382; ASP-383 AND ASP-387</scope>
    <scope>DISULFIDE BONDS</scope>
</reference>
<reference key="10">
    <citation type="journal article" date="2009" name="Nat. Struct. Mol. Biol.">
        <title>Structural insights into hedgehog ligand sequestration by the human hedgehog-interacting protein HHIP.</title>
        <authorList>
            <person name="Bishop B."/>
            <person name="Aricescu A.R."/>
            <person name="Harlos K."/>
            <person name="O'Callaghan C.A."/>
            <person name="Jones E.Y."/>
            <person name="Siebold C."/>
        </authorList>
    </citation>
    <scope>X-RAY CRYSTALLOGRAPHY (2.6 ANGSTROMS) OF 214-670 IN COMPLEX WITH SHH</scope>
    <scope>INTERACTION WITH SHH AND DHH</scope>
    <scope>DISULFIDE BONDS</scope>
    <scope>MUTAGENESIS OF ASP-383</scope>
    <scope>GLYCOSYLATION AT ASN-447</scope>
</reference>
<feature type="signal peptide" evidence="2">
    <location>
        <begin position="1"/>
        <end position="17"/>
    </location>
</feature>
<feature type="chain" id="PRO_0000007623" description="Hedgehog-interacting protein">
    <location>
        <begin position="18"/>
        <end position="700"/>
    </location>
</feature>
<feature type="domain" description="EGF-like 1" evidence="3">
    <location>
        <begin position="607"/>
        <end position="634"/>
    </location>
</feature>
<feature type="domain" description="EGF-like 2" evidence="3">
    <location>
        <begin position="635"/>
        <end position="667"/>
    </location>
</feature>
<feature type="region of interest" description="Interaction with SHH zinc binding site">
    <location>
        <begin position="376"/>
        <end position="388"/>
    </location>
</feature>
<feature type="binding site">
    <location>
        <position position="383"/>
    </location>
    <ligand>
        <name>Zn(2+)</name>
        <dbReference type="ChEBI" id="CHEBI:29105"/>
        <note>ligand shared with SHH</note>
    </ligand>
</feature>
<feature type="glycosylation site" description="N-linked (GlcNAc...) asparagine" evidence="2">
    <location>
        <position position="99"/>
    </location>
</feature>
<feature type="glycosylation site" description="N-linked (GlcNAc...) asparagine" evidence="2">
    <location>
        <position position="416"/>
    </location>
</feature>
<feature type="glycosylation site" description="N-linked (GlcNAc...) asparagine" evidence="9">
    <location>
        <position position="447"/>
    </location>
</feature>
<feature type="glycosylation site" description="N-linked (GlcNAc...) asparagine" evidence="2">
    <location>
        <position position="459"/>
    </location>
</feature>
<feature type="disulfide bond">
    <location>
        <begin position="216"/>
        <end position="536"/>
    </location>
</feature>
<feature type="disulfide bond">
    <location>
        <begin position="218"/>
        <end position="543"/>
    </location>
</feature>
<feature type="disulfide bond">
    <location>
        <begin position="402"/>
        <end position="624"/>
    </location>
</feature>
<feature type="disulfide bond">
    <location>
        <begin position="435"/>
        <end position="452"/>
    </location>
</feature>
<feature type="disulfide bond">
    <location>
        <begin position="500"/>
        <end position="594"/>
    </location>
</feature>
<feature type="disulfide bond">
    <location>
        <begin position="608"/>
        <end position="617"/>
    </location>
</feature>
<feature type="disulfide bond">
    <location>
        <begin position="612"/>
        <end position="623"/>
    </location>
</feature>
<feature type="disulfide bond">
    <location>
        <begin position="625"/>
        <end position="634"/>
    </location>
</feature>
<feature type="disulfide bond">
    <location>
        <begin position="639"/>
        <end position="649"/>
    </location>
</feature>
<feature type="disulfide bond">
    <location>
        <begin position="643"/>
        <end position="655"/>
    </location>
</feature>
<feature type="disulfide bond">
    <location>
        <begin position="657"/>
        <end position="666"/>
    </location>
</feature>
<feature type="splice variant" id="VSP_013192" description="In isoform 2." evidence="11 12">
    <original>GGDERGLLSLAFHPNYKKNGKLYVSYTTNQERWAIGPHDHILR</original>
    <variation>VGFLNFIYFCAGYVNFILVLPSSLKVFLCNKRKNLAGENKGAT</variation>
    <location>
        <begin position="278"/>
        <end position="320"/>
    </location>
</feature>
<feature type="splice variant" id="VSP_013193" description="In isoform 2." evidence="11 12">
    <location>
        <begin position="321"/>
        <end position="700"/>
    </location>
</feature>
<feature type="sequence variant" id="VAR_021518" description="In dbSNP:rs1730169668." evidence="6 10">
    <original>V</original>
    <variation>I</variation>
    <location>
        <position position="341"/>
    </location>
</feature>
<feature type="mutagenesis site" description="Abolishes SHH binding." evidence="8">
    <original>E</original>
    <variation>A</variation>
    <location>
        <position position="380"/>
    </location>
</feature>
<feature type="mutagenesis site" description="Abolishes SHH binding." evidence="8">
    <original>M</original>
    <variation>A</variation>
    <location>
        <position position="382"/>
    </location>
</feature>
<feature type="mutagenesis site" description="Abolishes SHH binding." evidence="8 9">
    <original>D</original>
    <variation>A</variation>
    <variation>R</variation>
    <location>
        <position position="383"/>
    </location>
</feature>
<feature type="mutagenesis site" description="Abolishes SHH binding." evidence="8">
    <original>D</original>
    <variation>A</variation>
    <location>
        <position position="387"/>
    </location>
</feature>
<feature type="sequence conflict" description="In Ref. 4; BAC11154." evidence="13" ref="4">
    <original>P</original>
    <variation>L</variation>
    <location>
        <position position="126"/>
    </location>
</feature>
<feature type="sequence conflict" description="In Ref. 1; AAG34731." evidence="13" ref="1">
    <original>L</original>
    <variation>I</variation>
    <location>
        <position position="135"/>
    </location>
</feature>
<feature type="sequence conflict" description="In Ref. 4; BAC11154." evidence="13" ref="4">
    <original>R</original>
    <variation>G</variation>
    <location>
        <position position="173"/>
    </location>
</feature>
<feature type="strand" evidence="20">
    <location>
        <begin position="40"/>
        <end position="43"/>
    </location>
</feature>
<feature type="helix" evidence="19">
    <location>
        <begin position="50"/>
        <end position="57"/>
    </location>
</feature>
<feature type="turn" evidence="20">
    <location>
        <begin position="70"/>
        <end position="72"/>
    </location>
</feature>
<feature type="strand" evidence="20">
    <location>
        <begin position="73"/>
        <end position="77"/>
    </location>
</feature>
<feature type="helix" evidence="20">
    <location>
        <begin position="102"/>
        <end position="111"/>
    </location>
</feature>
<feature type="helix" evidence="20">
    <location>
        <begin position="112"/>
        <end position="115"/>
    </location>
</feature>
<feature type="helix" evidence="20">
    <location>
        <begin position="119"/>
        <end position="122"/>
    </location>
</feature>
<feature type="helix" evidence="20">
    <location>
        <begin position="142"/>
        <end position="152"/>
    </location>
</feature>
<feature type="helix" evidence="20">
    <location>
        <begin position="159"/>
        <end position="161"/>
    </location>
</feature>
<feature type="helix" evidence="20">
    <location>
        <begin position="164"/>
        <end position="171"/>
    </location>
</feature>
<feature type="strand" evidence="19">
    <location>
        <begin position="175"/>
        <end position="177"/>
    </location>
</feature>
<feature type="strand" evidence="22">
    <location>
        <begin position="217"/>
        <end position="233"/>
    </location>
</feature>
<feature type="strand" evidence="22">
    <location>
        <begin position="236"/>
        <end position="239"/>
    </location>
</feature>
<feature type="strand" evidence="22">
    <location>
        <begin position="242"/>
        <end position="246"/>
    </location>
</feature>
<feature type="turn" evidence="22">
    <location>
        <begin position="247"/>
        <end position="249"/>
    </location>
</feature>
<feature type="strand" evidence="22">
    <location>
        <begin position="250"/>
        <end position="254"/>
    </location>
</feature>
<feature type="strand" evidence="16">
    <location>
        <begin position="256"/>
        <end position="258"/>
    </location>
</feature>
<feature type="strand" evidence="22">
    <location>
        <begin position="265"/>
        <end position="267"/>
    </location>
</feature>
<feature type="turn" evidence="22">
    <location>
        <begin position="269"/>
        <end position="271"/>
    </location>
</feature>
<feature type="strand" evidence="22">
    <location>
        <begin position="276"/>
        <end position="279"/>
    </location>
</feature>
<feature type="strand" evidence="22">
    <location>
        <begin position="283"/>
        <end position="289"/>
    </location>
</feature>
<feature type="helix" evidence="22">
    <location>
        <begin position="293"/>
        <end position="296"/>
    </location>
</feature>
<feature type="strand" evidence="22">
    <location>
        <begin position="298"/>
        <end position="305"/>
    </location>
</feature>
<feature type="strand" evidence="15">
    <location>
        <begin position="312"/>
        <end position="315"/>
    </location>
</feature>
<feature type="strand" evidence="22">
    <location>
        <begin position="317"/>
        <end position="326"/>
    </location>
</feature>
<feature type="strand" evidence="22">
    <location>
        <begin position="333"/>
        <end position="352"/>
    </location>
</feature>
<feature type="strand" evidence="22">
    <location>
        <begin position="354"/>
        <end position="359"/>
    </location>
</feature>
<feature type="helix" evidence="18">
    <location>
        <begin position="361"/>
        <end position="363"/>
    </location>
</feature>
<feature type="strand" evidence="22">
    <location>
        <begin position="365"/>
        <end position="369"/>
    </location>
</feature>
<feature type="helix" evidence="22">
    <location>
        <begin position="376"/>
        <end position="381"/>
    </location>
</feature>
<feature type="turn" evidence="21">
    <location>
        <begin position="387"/>
        <end position="390"/>
    </location>
</feature>
<feature type="strand" evidence="22">
    <location>
        <begin position="391"/>
        <end position="396"/>
    </location>
</feature>
<feature type="strand" evidence="22">
    <location>
        <begin position="402"/>
        <end position="405"/>
    </location>
</feature>
<feature type="turn" evidence="22">
    <location>
        <begin position="413"/>
        <end position="416"/>
    </location>
</feature>
<feature type="strand" evidence="22">
    <location>
        <begin position="418"/>
        <end position="420"/>
    </location>
</feature>
<feature type="strand" evidence="22">
    <location>
        <begin position="424"/>
        <end position="427"/>
    </location>
</feature>
<feature type="strand" evidence="22">
    <location>
        <begin position="430"/>
        <end position="432"/>
    </location>
</feature>
<feature type="strand" evidence="22">
    <location>
        <begin position="436"/>
        <end position="438"/>
    </location>
</feature>
<feature type="strand" evidence="16">
    <location>
        <begin position="442"/>
        <end position="445"/>
    </location>
</feature>
<feature type="strand" evidence="22">
    <location>
        <begin position="449"/>
        <end position="455"/>
    </location>
</feature>
<feature type="strand" evidence="17">
    <location>
        <begin position="457"/>
        <end position="459"/>
    </location>
</feature>
<feature type="strand" evidence="22">
    <location>
        <begin position="463"/>
        <end position="468"/>
    </location>
</feature>
<feature type="strand" evidence="21">
    <location>
        <begin position="480"/>
        <end position="483"/>
    </location>
</feature>
<feature type="strand" evidence="22">
    <location>
        <begin position="491"/>
        <end position="496"/>
    </location>
</feature>
<feature type="turn" evidence="22">
    <location>
        <begin position="504"/>
        <end position="507"/>
    </location>
</feature>
<feature type="strand" evidence="22">
    <location>
        <begin position="509"/>
        <end position="513"/>
    </location>
</feature>
<feature type="strand" evidence="17">
    <location>
        <begin position="514"/>
        <end position="516"/>
    </location>
</feature>
<feature type="strand" evidence="22">
    <location>
        <begin position="518"/>
        <end position="523"/>
    </location>
</feature>
<feature type="turn" evidence="22">
    <location>
        <begin position="525"/>
        <end position="527"/>
    </location>
</feature>
<feature type="strand" evidence="22">
    <location>
        <begin position="530"/>
        <end position="535"/>
    </location>
</feature>
<feature type="strand" evidence="15">
    <location>
        <begin position="537"/>
        <end position="539"/>
    </location>
</feature>
<feature type="strand" evidence="22">
    <location>
        <begin position="543"/>
        <end position="545"/>
    </location>
</feature>
<feature type="strand" evidence="22">
    <location>
        <begin position="548"/>
        <end position="556"/>
    </location>
</feature>
<feature type="strand" evidence="17">
    <location>
        <begin position="558"/>
        <end position="560"/>
    </location>
</feature>
<feature type="strand" evidence="22">
    <location>
        <begin position="562"/>
        <end position="567"/>
    </location>
</feature>
<feature type="helix" evidence="15">
    <location>
        <begin position="571"/>
        <end position="573"/>
    </location>
</feature>
<feature type="strand" evidence="22">
    <location>
        <begin position="577"/>
        <end position="583"/>
    </location>
</feature>
<feature type="strand" evidence="22">
    <location>
        <begin position="587"/>
        <end position="590"/>
    </location>
</feature>
<feature type="helix" evidence="22">
    <location>
        <begin position="592"/>
        <end position="594"/>
    </location>
</feature>
<feature type="helix" evidence="22">
    <location>
        <begin position="607"/>
        <end position="611"/>
    </location>
</feature>
<feature type="strand" evidence="22">
    <location>
        <begin position="614"/>
        <end position="617"/>
    </location>
</feature>
<feature type="strand" evidence="22">
    <location>
        <begin position="623"/>
        <end position="625"/>
    </location>
</feature>
<feature type="strand" evidence="22">
    <location>
        <begin position="629"/>
        <end position="631"/>
    </location>
</feature>
<feature type="strand" evidence="14">
    <location>
        <begin position="644"/>
        <end position="646"/>
    </location>
</feature>
<feature type="strand" evidence="22">
    <location>
        <begin position="648"/>
        <end position="651"/>
    </location>
</feature>
<feature type="strand" evidence="22">
    <location>
        <begin position="654"/>
        <end position="656"/>
    </location>
</feature>
<feature type="strand" evidence="22">
    <location>
        <begin position="661"/>
        <end position="663"/>
    </location>
</feature>
<accession>Q96QV1</accession>
<accession>Q6PK09</accession>
<accession>Q8NCI7</accession>
<accession>Q9BXK3</accession>
<accession>Q9H1J4</accession>
<accession>Q9H7E7</accession>
<gene>
    <name type="primary">HHIP</name>
    <name type="synonym">HIP</name>
    <name type="ORF">UNQ5825/PRO19644</name>
</gene>
<keyword id="KW-0002">3D-structure</keyword>
<keyword id="KW-0025">Alternative splicing</keyword>
<keyword id="KW-1003">Cell membrane</keyword>
<keyword id="KW-0963">Cytoplasm</keyword>
<keyword id="KW-1015">Disulfide bond</keyword>
<keyword id="KW-0245">EGF-like domain</keyword>
<keyword id="KW-0325">Glycoprotein</keyword>
<keyword id="KW-0472">Membrane</keyword>
<keyword id="KW-0479">Metal-binding</keyword>
<keyword id="KW-1267">Proteomics identification</keyword>
<keyword id="KW-1185">Reference proteome</keyword>
<keyword id="KW-0677">Repeat</keyword>
<keyword id="KW-0964">Secreted</keyword>
<keyword id="KW-0732">Signal</keyword>
<keyword id="KW-0862">Zinc</keyword>
<evidence type="ECO:0000250" key="1"/>
<evidence type="ECO:0000255" key="2"/>
<evidence type="ECO:0000255" key="3">
    <source>
        <dbReference type="PROSITE-ProRule" id="PRU00076"/>
    </source>
</evidence>
<evidence type="ECO:0000269" key="4">
    <source>
    </source>
</evidence>
<evidence type="ECO:0000269" key="5">
    <source>
    </source>
</evidence>
<evidence type="ECO:0000269" key="6">
    <source>
    </source>
</evidence>
<evidence type="ECO:0000269" key="7">
    <source>
    </source>
</evidence>
<evidence type="ECO:0000269" key="8">
    <source>
    </source>
</evidence>
<evidence type="ECO:0000269" key="9">
    <source>
    </source>
</evidence>
<evidence type="ECO:0000269" key="10">
    <source ref="1"/>
</evidence>
<evidence type="ECO:0000303" key="11">
    <source>
    </source>
</evidence>
<evidence type="ECO:0000303" key="12">
    <source>
    </source>
</evidence>
<evidence type="ECO:0000305" key="13"/>
<evidence type="ECO:0007829" key="14">
    <source>
        <dbReference type="PDB" id="2WFX"/>
    </source>
</evidence>
<evidence type="ECO:0007829" key="15">
    <source>
        <dbReference type="PDB" id="2WG3"/>
    </source>
</evidence>
<evidence type="ECO:0007829" key="16">
    <source>
        <dbReference type="PDB" id="2WG4"/>
    </source>
</evidence>
<evidence type="ECO:0007829" key="17">
    <source>
        <dbReference type="PDB" id="3HO3"/>
    </source>
</evidence>
<evidence type="ECO:0007829" key="18">
    <source>
        <dbReference type="PDB" id="3HO5"/>
    </source>
</evidence>
<evidence type="ECO:0007829" key="19">
    <source>
        <dbReference type="PDB" id="7PGK"/>
    </source>
</evidence>
<evidence type="ECO:0007829" key="20">
    <source>
        <dbReference type="PDB" id="7PGL"/>
    </source>
</evidence>
<evidence type="ECO:0007829" key="21">
    <source>
        <dbReference type="PDB" id="7PGM"/>
    </source>
</evidence>
<evidence type="ECO:0007829" key="22">
    <source>
        <dbReference type="PDB" id="7PGN"/>
    </source>
</evidence>
<name>HHIP_HUMAN</name>